<organism>
    <name type="scientific">Clostridium botulinum (strain ATCC 19397 / Type A)</name>
    <dbReference type="NCBI Taxonomy" id="441770"/>
    <lineage>
        <taxon>Bacteria</taxon>
        <taxon>Bacillati</taxon>
        <taxon>Bacillota</taxon>
        <taxon>Clostridia</taxon>
        <taxon>Eubacteriales</taxon>
        <taxon>Clostridiaceae</taxon>
        <taxon>Clostridium</taxon>
    </lineage>
</organism>
<reference key="1">
    <citation type="journal article" date="2007" name="PLoS ONE">
        <title>Analysis of the neurotoxin complex genes in Clostridium botulinum A1-A4 and B1 strains: BoNT/A3, /Ba4 and /B1 clusters are located within plasmids.</title>
        <authorList>
            <person name="Smith T.J."/>
            <person name="Hill K.K."/>
            <person name="Foley B.T."/>
            <person name="Detter J.C."/>
            <person name="Munk A.C."/>
            <person name="Bruce D.C."/>
            <person name="Doggett N.A."/>
            <person name="Smith L.A."/>
            <person name="Marks J.D."/>
            <person name="Xie G."/>
            <person name="Brettin T.S."/>
        </authorList>
    </citation>
    <scope>NUCLEOTIDE SEQUENCE [LARGE SCALE GENOMIC DNA]</scope>
    <source>
        <strain>ATCC 19397 / Type A</strain>
    </source>
</reference>
<protein>
    <recommendedName>
        <fullName evidence="1">Cell division topological specificity factor</fullName>
    </recommendedName>
</protein>
<dbReference type="EMBL" id="CP000726">
    <property type="protein sequence ID" value="ABS33344.1"/>
    <property type="molecule type" value="Genomic_DNA"/>
</dbReference>
<dbReference type="RefSeq" id="WP_003358099.1">
    <property type="nucleotide sequence ID" value="NC_009697.1"/>
</dbReference>
<dbReference type="SMR" id="A7FXV6"/>
<dbReference type="GeneID" id="5187008"/>
<dbReference type="KEGG" id="cba:CLB_3021"/>
<dbReference type="HOGENOM" id="CLU_137929_1_0_9"/>
<dbReference type="GO" id="GO:0051301">
    <property type="term" value="P:cell division"/>
    <property type="evidence" value="ECO:0007669"/>
    <property type="project" value="UniProtKB-KW"/>
</dbReference>
<dbReference type="GO" id="GO:0032955">
    <property type="term" value="P:regulation of division septum assembly"/>
    <property type="evidence" value="ECO:0007669"/>
    <property type="project" value="InterPro"/>
</dbReference>
<dbReference type="FunFam" id="3.30.1070.10:FF:000003">
    <property type="entry name" value="Cell division topological specificity factor"/>
    <property type="match status" value="1"/>
</dbReference>
<dbReference type="Gene3D" id="3.30.1070.10">
    <property type="entry name" value="Cell division topological specificity factor MinE"/>
    <property type="match status" value="1"/>
</dbReference>
<dbReference type="HAMAP" id="MF_00262">
    <property type="entry name" value="MinE"/>
    <property type="match status" value="1"/>
</dbReference>
<dbReference type="InterPro" id="IPR005527">
    <property type="entry name" value="MinE"/>
</dbReference>
<dbReference type="InterPro" id="IPR036707">
    <property type="entry name" value="MinE_sf"/>
</dbReference>
<dbReference type="NCBIfam" id="TIGR01215">
    <property type="entry name" value="minE"/>
    <property type="match status" value="1"/>
</dbReference>
<dbReference type="NCBIfam" id="NF001422">
    <property type="entry name" value="PRK00296.1"/>
    <property type="match status" value="1"/>
</dbReference>
<dbReference type="Pfam" id="PF03776">
    <property type="entry name" value="MinE"/>
    <property type="match status" value="1"/>
</dbReference>
<dbReference type="SUPFAM" id="SSF55229">
    <property type="entry name" value="Cell division protein MinE topological specificity domain"/>
    <property type="match status" value="1"/>
</dbReference>
<name>MINE_CLOB1</name>
<proteinExistence type="inferred from homology"/>
<comment type="function">
    <text evidence="1">Prevents the cell division inhibition by proteins MinC and MinD at internal division sites while permitting inhibition at polar sites. This ensures cell division at the proper site by restricting the formation of a division septum at the midpoint of the long axis of the cell.</text>
</comment>
<comment type="similarity">
    <text evidence="1">Belongs to the MinE family.</text>
</comment>
<keyword id="KW-0131">Cell cycle</keyword>
<keyword id="KW-0132">Cell division</keyword>
<gene>
    <name evidence="1" type="primary">minE</name>
    <name type="ordered locus">CLB_3021</name>
</gene>
<accession>A7FXV6</accession>
<feature type="chain" id="PRO_1000047780" description="Cell division topological specificity factor">
    <location>
        <begin position="1"/>
        <end position="87"/>
    </location>
</feature>
<sequence length="87" mass="10027">MDLFKFFSKQSSKDVAKERLKLILIQDRNSISPDVLESIREDMLKVISKYIEIDNEDVDIKMSSVEEIEGMSPALIASIPIKRIKKK</sequence>
<evidence type="ECO:0000255" key="1">
    <source>
        <dbReference type="HAMAP-Rule" id="MF_00262"/>
    </source>
</evidence>